<organism>
    <name type="scientific">Pongo abelii</name>
    <name type="common">Sumatran orangutan</name>
    <name type="synonym">Pongo pygmaeus abelii</name>
    <dbReference type="NCBI Taxonomy" id="9601"/>
    <lineage>
        <taxon>Eukaryota</taxon>
        <taxon>Metazoa</taxon>
        <taxon>Chordata</taxon>
        <taxon>Craniata</taxon>
        <taxon>Vertebrata</taxon>
        <taxon>Euteleostomi</taxon>
        <taxon>Mammalia</taxon>
        <taxon>Eutheria</taxon>
        <taxon>Euarchontoglires</taxon>
        <taxon>Primates</taxon>
        <taxon>Haplorrhini</taxon>
        <taxon>Catarrhini</taxon>
        <taxon>Hominidae</taxon>
        <taxon>Pongo</taxon>
    </lineage>
</organism>
<proteinExistence type="inferred from homology"/>
<comment type="function">
    <text evidence="2 3">Acts as a ligand for C-C chemokine receptor CCR2 (By similarity). Signals through binding and activation of CCR2 and induces a strong chemotactic response and mobilization of intracellular calcium ions (By similarity). Exhibits a chemotactic activity for monocytes and basophils but not neutrophils or eosinophils (By similarity). Plays an important role in mediating peripheral nerve injury-induced neuropathic pain (By similarity). Increases NMDA-mediated synaptic transmission in both dopamine D1 and D2 receptor-containing neurons, which may be caused by MAPK/ERK-dependent phosphorylation of GRIN2B/NMDAR2B (By similarity).</text>
</comment>
<comment type="subunit">
    <text evidence="3">Monomer or homodimer; in equilibrium. Is tethered on endothelial cells by glycosaminoglycan (GAG) side chains of proteoglycans. Interacts with TNFAIP6 (via Link domain).</text>
</comment>
<comment type="subcellular location">
    <subcellularLocation>
        <location evidence="3">Secreted</location>
    </subcellularLocation>
</comment>
<comment type="PTM">
    <text evidence="3">Processing at the N-terminus can regulate receptor and target cell selectivity (By similarity). Deletion of the N-terminal residue converts it from an activator of basophil to an eosinophil chemoattractant (By similarity).</text>
</comment>
<comment type="PTM">
    <text evidence="3">N-Glycosylated.</text>
</comment>
<comment type="similarity">
    <text evidence="5">Belongs to the intercrine beta (chemokine CC) family.</text>
</comment>
<evidence type="ECO:0000250" key="1"/>
<evidence type="ECO:0000250" key="2">
    <source>
        <dbReference type="UniProtKB" id="P10148"/>
    </source>
</evidence>
<evidence type="ECO:0000250" key="3">
    <source>
        <dbReference type="UniProtKB" id="P13500"/>
    </source>
</evidence>
<evidence type="ECO:0000255" key="4"/>
<evidence type="ECO:0000305" key="5"/>
<sequence>MKVSAALLCLLLIAATFSPQGLAQPDAINAPVTCCYNFTNRKISVQRLASYRRITSSKCPKEAVIFKTIVAKEICADPKQKWVQDSMDHLDKQTQTLKT</sequence>
<keyword id="KW-0145">Chemotaxis</keyword>
<keyword id="KW-0202">Cytokine</keyword>
<keyword id="KW-1015">Disulfide bond</keyword>
<keyword id="KW-0325">Glycoprotein</keyword>
<keyword id="KW-0395">Inflammatory response</keyword>
<keyword id="KW-0873">Pyrrolidone carboxylic acid</keyword>
<keyword id="KW-1185">Reference proteome</keyword>
<keyword id="KW-0964">Secreted</keyword>
<keyword id="KW-0732">Signal</keyword>
<protein>
    <recommendedName>
        <fullName>C-C motif chemokine 2</fullName>
    </recommendedName>
    <alternativeName>
        <fullName>Small-inducible cytokine A2</fullName>
    </alternativeName>
</protein>
<gene>
    <name type="primary">CCL2</name>
</gene>
<feature type="signal peptide" evidence="1">
    <location>
        <begin position="1"/>
        <end position="23"/>
    </location>
</feature>
<feature type="chain" id="PRO_0000005150" description="C-C motif chemokine 2">
    <location>
        <begin position="24"/>
        <end position="99"/>
    </location>
</feature>
<feature type="modified residue" description="Pyrrolidone carboxylic acid" evidence="3">
    <location>
        <position position="24"/>
    </location>
</feature>
<feature type="glycosylation site" description="N-linked (GlcNAc...) asparagine" evidence="4">
    <location>
        <position position="37"/>
    </location>
</feature>
<feature type="disulfide bond" evidence="1">
    <location>
        <begin position="34"/>
        <end position="59"/>
    </location>
</feature>
<feature type="disulfide bond" evidence="1">
    <location>
        <begin position="35"/>
        <end position="75"/>
    </location>
</feature>
<reference key="1">
    <citation type="submission" date="2004-11" db="EMBL/GenBank/DDBJ databases">
        <authorList>
            <consortium name="The German cDNA consortium"/>
        </authorList>
    </citation>
    <scope>NUCLEOTIDE SEQUENCE [LARGE SCALE MRNA]</scope>
    <source>
        <tissue>Kidney</tissue>
    </source>
</reference>
<name>CCL2_PONAB</name>
<dbReference type="EMBL" id="CR859186">
    <property type="protein sequence ID" value="CAH91374.1"/>
    <property type="molecule type" value="mRNA"/>
</dbReference>
<dbReference type="RefSeq" id="NP_001125812.1">
    <property type="nucleotide sequence ID" value="NM_001132340.2"/>
</dbReference>
<dbReference type="SMR" id="Q5RA36"/>
<dbReference type="FunCoup" id="Q5RA36">
    <property type="interactions" value="896"/>
</dbReference>
<dbReference type="STRING" id="9601.ENSPPYP00000009183"/>
<dbReference type="GlyCosmos" id="Q5RA36">
    <property type="glycosylation" value="1 site, No reported glycans"/>
</dbReference>
<dbReference type="GeneID" id="100172740"/>
<dbReference type="KEGG" id="pon:100172740"/>
<dbReference type="CTD" id="6347"/>
<dbReference type="eggNOG" id="ENOG502S6ZP">
    <property type="taxonomic scope" value="Eukaryota"/>
</dbReference>
<dbReference type="InParanoid" id="Q5RA36"/>
<dbReference type="OrthoDB" id="8934837at2759"/>
<dbReference type="Proteomes" id="UP000001595">
    <property type="component" value="Unplaced"/>
</dbReference>
<dbReference type="GO" id="GO:0005615">
    <property type="term" value="C:extracellular space"/>
    <property type="evidence" value="ECO:0007669"/>
    <property type="project" value="UniProtKB-KW"/>
</dbReference>
<dbReference type="GO" id="GO:0048020">
    <property type="term" value="F:CCR chemokine receptor binding"/>
    <property type="evidence" value="ECO:0007669"/>
    <property type="project" value="TreeGrafter"/>
</dbReference>
<dbReference type="GO" id="GO:0008009">
    <property type="term" value="F:chemokine activity"/>
    <property type="evidence" value="ECO:0007669"/>
    <property type="project" value="InterPro"/>
</dbReference>
<dbReference type="GO" id="GO:0061844">
    <property type="term" value="P:antimicrobial humoral immune response mediated by antimicrobial peptide"/>
    <property type="evidence" value="ECO:0007669"/>
    <property type="project" value="TreeGrafter"/>
</dbReference>
<dbReference type="GO" id="GO:0070098">
    <property type="term" value="P:chemokine-mediated signaling pathway"/>
    <property type="evidence" value="ECO:0007669"/>
    <property type="project" value="TreeGrafter"/>
</dbReference>
<dbReference type="GO" id="GO:0048245">
    <property type="term" value="P:eosinophil chemotaxis"/>
    <property type="evidence" value="ECO:0007669"/>
    <property type="project" value="TreeGrafter"/>
</dbReference>
<dbReference type="GO" id="GO:0006954">
    <property type="term" value="P:inflammatory response"/>
    <property type="evidence" value="ECO:0007669"/>
    <property type="project" value="UniProtKB-KW"/>
</dbReference>
<dbReference type="GO" id="GO:0030335">
    <property type="term" value="P:positive regulation of cell migration"/>
    <property type="evidence" value="ECO:0007669"/>
    <property type="project" value="TreeGrafter"/>
</dbReference>
<dbReference type="GO" id="GO:0051968">
    <property type="term" value="P:positive regulation of synaptic transmission, glutamatergic"/>
    <property type="evidence" value="ECO:0000250"/>
    <property type="project" value="UniProtKB"/>
</dbReference>
<dbReference type="GO" id="GO:0019233">
    <property type="term" value="P:sensory perception of pain"/>
    <property type="evidence" value="ECO:0000250"/>
    <property type="project" value="UniProtKB"/>
</dbReference>
<dbReference type="CDD" id="cd00272">
    <property type="entry name" value="Chemokine_CC"/>
    <property type="match status" value="1"/>
</dbReference>
<dbReference type="FunFam" id="2.40.50.40:FF:000002">
    <property type="entry name" value="C-C motif chemokine"/>
    <property type="match status" value="1"/>
</dbReference>
<dbReference type="Gene3D" id="2.40.50.40">
    <property type="match status" value="1"/>
</dbReference>
<dbReference type="InterPro" id="IPR039809">
    <property type="entry name" value="Chemokine_b/g/d"/>
</dbReference>
<dbReference type="InterPro" id="IPR000827">
    <property type="entry name" value="Chemokine_CC_CS"/>
</dbReference>
<dbReference type="InterPro" id="IPR001811">
    <property type="entry name" value="Chemokine_IL8-like_dom"/>
</dbReference>
<dbReference type="InterPro" id="IPR036048">
    <property type="entry name" value="Interleukin_8-like_sf"/>
</dbReference>
<dbReference type="PANTHER" id="PTHR12015:SF98">
    <property type="entry name" value="C-C MOTIF CHEMOKINE 2"/>
    <property type="match status" value="1"/>
</dbReference>
<dbReference type="PANTHER" id="PTHR12015">
    <property type="entry name" value="SMALL INDUCIBLE CYTOKINE A"/>
    <property type="match status" value="1"/>
</dbReference>
<dbReference type="Pfam" id="PF00048">
    <property type="entry name" value="IL8"/>
    <property type="match status" value="1"/>
</dbReference>
<dbReference type="PRINTS" id="PR01721">
    <property type="entry name" value="FRACTALKINE"/>
</dbReference>
<dbReference type="SMART" id="SM00199">
    <property type="entry name" value="SCY"/>
    <property type="match status" value="1"/>
</dbReference>
<dbReference type="SUPFAM" id="SSF54117">
    <property type="entry name" value="Interleukin 8-like chemokines"/>
    <property type="match status" value="1"/>
</dbReference>
<dbReference type="PROSITE" id="PS00472">
    <property type="entry name" value="SMALL_CYTOKINES_CC"/>
    <property type="match status" value="1"/>
</dbReference>
<accession>Q5RA36</accession>